<gene>
    <name type="primary">Tmem59l</name>
    <name type="synonym">Bsmap</name>
</gene>
<name>TM59L_RAT</name>
<protein>
    <recommendedName>
        <fullName>Transmembrane protein 59-like</fullName>
    </recommendedName>
    <alternativeName>
        <fullName>Brain-specific membrane-anchored protein</fullName>
    </alternativeName>
</protein>
<keyword id="KW-0325">Glycoprotein</keyword>
<keyword id="KW-0333">Golgi apparatus</keyword>
<keyword id="KW-0472">Membrane</keyword>
<keyword id="KW-1185">Reference proteome</keyword>
<keyword id="KW-0732">Signal</keyword>
<keyword id="KW-0812">Transmembrane</keyword>
<keyword id="KW-1133">Transmembrane helix</keyword>
<feature type="signal peptide" evidence="2">
    <location>
        <begin position="1"/>
        <end position="21"/>
    </location>
</feature>
<feature type="chain" id="PRO_0000003002" description="Transmembrane protein 59-like">
    <location>
        <begin position="22"/>
        <end position="331"/>
    </location>
</feature>
<feature type="transmembrane region" description="Helical" evidence="2">
    <location>
        <begin position="258"/>
        <end position="278"/>
    </location>
</feature>
<feature type="region of interest" description="Disordered" evidence="3">
    <location>
        <begin position="15"/>
        <end position="62"/>
    </location>
</feature>
<feature type="short sequence motif" description="Microbody targeting signal" evidence="2">
    <location>
        <begin position="329"/>
        <end position="331"/>
    </location>
</feature>
<feature type="compositionally biased region" description="Pro residues" evidence="3">
    <location>
        <begin position="45"/>
        <end position="54"/>
    </location>
</feature>
<feature type="glycosylation site" description="N-linked (GlcNAc...) asparagine" evidence="2">
    <location>
        <position position="90"/>
    </location>
</feature>
<evidence type="ECO:0000250" key="1"/>
<evidence type="ECO:0000255" key="2"/>
<evidence type="ECO:0000256" key="3">
    <source>
        <dbReference type="SAM" id="MobiDB-lite"/>
    </source>
</evidence>
<evidence type="ECO:0000305" key="4"/>
<dbReference type="EMBL" id="BC089056">
    <property type="protein sequence ID" value="AAH89056.1"/>
    <property type="molecule type" value="mRNA"/>
</dbReference>
<dbReference type="SMR" id="Q5HZE8"/>
<dbReference type="FunCoup" id="Q5HZE8">
    <property type="interactions" value="217"/>
</dbReference>
<dbReference type="STRING" id="10116.ENSRNOP00000075600"/>
<dbReference type="GlyCosmos" id="Q5HZE8">
    <property type="glycosylation" value="1 site, No reported glycans"/>
</dbReference>
<dbReference type="GlyGen" id="Q5HZE8">
    <property type="glycosylation" value="3 sites"/>
</dbReference>
<dbReference type="PhosphoSitePlus" id="Q5HZE8"/>
<dbReference type="PaxDb" id="10116-ENSRNOP00000029378"/>
<dbReference type="UCSC" id="RGD:1305557">
    <property type="organism name" value="rat"/>
</dbReference>
<dbReference type="AGR" id="RGD:1305557"/>
<dbReference type="RGD" id="1305557">
    <property type="gene designation" value="Tmem59l"/>
</dbReference>
<dbReference type="eggNOG" id="ENOG502S08T">
    <property type="taxonomic scope" value="Eukaryota"/>
</dbReference>
<dbReference type="InParanoid" id="Q5HZE8"/>
<dbReference type="PhylomeDB" id="Q5HZE8"/>
<dbReference type="TreeFam" id="TF331226"/>
<dbReference type="PRO" id="PR:Q5HZE8"/>
<dbReference type="Proteomes" id="UP000002494">
    <property type="component" value="Unplaced"/>
</dbReference>
<dbReference type="GO" id="GO:0000139">
    <property type="term" value="C:Golgi membrane"/>
    <property type="evidence" value="ECO:0007669"/>
    <property type="project" value="UniProtKB-SubCell"/>
</dbReference>
<dbReference type="GO" id="GO:0001658">
    <property type="term" value="P:branching involved in ureteric bud morphogenesis"/>
    <property type="evidence" value="ECO:0000266"/>
    <property type="project" value="RGD"/>
</dbReference>
<dbReference type="InterPro" id="IPR022065">
    <property type="entry name" value="Uncharacterised_TMEM59"/>
</dbReference>
<dbReference type="PANTHER" id="PTHR28652:SF1">
    <property type="entry name" value="TRANSMEMBRANE PROTEIN 59-LIKE"/>
    <property type="match status" value="1"/>
</dbReference>
<dbReference type="PANTHER" id="PTHR28652">
    <property type="entry name" value="TRANSMEMBRANE PROTEIN 59-LIKE PROTEIN"/>
    <property type="match status" value="1"/>
</dbReference>
<dbReference type="Pfam" id="PF12280">
    <property type="entry name" value="BSMAP"/>
    <property type="match status" value="1"/>
</dbReference>
<organism>
    <name type="scientific">Rattus norvegicus</name>
    <name type="common">Rat</name>
    <dbReference type="NCBI Taxonomy" id="10116"/>
    <lineage>
        <taxon>Eukaryota</taxon>
        <taxon>Metazoa</taxon>
        <taxon>Chordata</taxon>
        <taxon>Craniata</taxon>
        <taxon>Vertebrata</taxon>
        <taxon>Euteleostomi</taxon>
        <taxon>Mammalia</taxon>
        <taxon>Eutheria</taxon>
        <taxon>Euarchontoglires</taxon>
        <taxon>Glires</taxon>
        <taxon>Rodentia</taxon>
        <taxon>Myomorpha</taxon>
        <taxon>Muroidea</taxon>
        <taxon>Muridae</taxon>
        <taxon>Murinae</taxon>
        <taxon>Rattus</taxon>
    </lineage>
</organism>
<sequence length="331" mass="36976">MAAVALPLLLLLASPATPTPARDPFSPQLGDTQRCQQRCRQRHPGLPPAQPEPEGPSESPNNKAVLINACERGCRLFSICRFVARSSRPNATETECEAACTEAYVKAKEQQACSEGCWGQIPEPETQLEQKELALDPPSGSLSLRHLFTMLCSDLMSSAQDLISSTWTYSLQTDNRKTQPVVENFAFQGSRLQRVEVTWRGSHPKALEVHMDPMSPLEKVRRAKPHLKTSKAKVESEDQQESDFLSCMSRRSGLPRWVLFCCLFLSVLIILWLSCCTLVTTPGQHLKFQPLTAEQHKGLLVESNWPLYPPLPPAYEDSPPPYKLKLDLTTL</sequence>
<comment type="function">
    <text evidence="1">Modulates the O-glycosylation and complex N-glycosylation steps occurring during the Golgi maturation of APP. Inhibits APP transport to the cell surface and further shedding (By similarity).</text>
</comment>
<comment type="subcellular location">
    <subcellularLocation>
        <location evidence="1">Golgi apparatus membrane</location>
        <topology evidence="1">Single-pass type I membrane protein</topology>
    </subcellularLocation>
</comment>
<comment type="similarity">
    <text evidence="4">Belongs to the TMEM59 family.</text>
</comment>
<accession>Q5HZE8</accession>
<reference key="1">
    <citation type="journal article" date="2004" name="Genome Res.">
        <title>The status, quality, and expansion of the NIH full-length cDNA project: the Mammalian Gene Collection (MGC).</title>
        <authorList>
            <consortium name="The MGC Project Team"/>
        </authorList>
    </citation>
    <scope>NUCLEOTIDE SEQUENCE [LARGE SCALE MRNA] OF 2-331</scope>
    <source>
        <tissue>Brain</tissue>
    </source>
</reference>
<proteinExistence type="evidence at transcript level"/>